<feature type="chain" id="PRO_1000097928" description="ATP-dependent Clp protease ATP-binding subunit ClpX">
    <location>
        <begin position="1"/>
        <end position="423"/>
    </location>
</feature>
<feature type="domain" description="ClpX-type ZB" evidence="2">
    <location>
        <begin position="3"/>
        <end position="56"/>
    </location>
</feature>
<feature type="binding site" evidence="2">
    <location>
        <position position="15"/>
    </location>
    <ligand>
        <name>Zn(2+)</name>
        <dbReference type="ChEBI" id="CHEBI:29105"/>
    </ligand>
</feature>
<feature type="binding site" evidence="2">
    <location>
        <position position="18"/>
    </location>
    <ligand>
        <name>Zn(2+)</name>
        <dbReference type="ChEBI" id="CHEBI:29105"/>
    </ligand>
</feature>
<feature type="binding site" evidence="2">
    <location>
        <position position="37"/>
    </location>
    <ligand>
        <name>Zn(2+)</name>
        <dbReference type="ChEBI" id="CHEBI:29105"/>
    </ligand>
</feature>
<feature type="binding site" evidence="2">
    <location>
        <position position="40"/>
    </location>
    <ligand>
        <name>Zn(2+)</name>
        <dbReference type="ChEBI" id="CHEBI:29105"/>
    </ligand>
</feature>
<feature type="binding site" evidence="1">
    <location>
        <begin position="122"/>
        <end position="129"/>
    </location>
    <ligand>
        <name>ATP</name>
        <dbReference type="ChEBI" id="CHEBI:30616"/>
    </ligand>
</feature>
<organism>
    <name type="scientific">Burkholderia orbicola (strain MC0-3)</name>
    <dbReference type="NCBI Taxonomy" id="406425"/>
    <lineage>
        <taxon>Bacteria</taxon>
        <taxon>Pseudomonadati</taxon>
        <taxon>Pseudomonadota</taxon>
        <taxon>Betaproteobacteria</taxon>
        <taxon>Burkholderiales</taxon>
        <taxon>Burkholderiaceae</taxon>
        <taxon>Burkholderia</taxon>
        <taxon>Burkholderia cepacia complex</taxon>
        <taxon>Burkholderia orbicola</taxon>
    </lineage>
</organism>
<name>CLPX_BURO0</name>
<gene>
    <name evidence="1" type="primary">clpX</name>
    <name type="ordered locus">Bcenmc03_1945</name>
</gene>
<keyword id="KW-0067">ATP-binding</keyword>
<keyword id="KW-0143">Chaperone</keyword>
<keyword id="KW-0479">Metal-binding</keyword>
<keyword id="KW-0547">Nucleotide-binding</keyword>
<keyword id="KW-0862">Zinc</keyword>
<accession>B1JTU9</accession>
<dbReference type="EMBL" id="CP000958">
    <property type="protein sequence ID" value="ACA91106.1"/>
    <property type="molecule type" value="Genomic_DNA"/>
</dbReference>
<dbReference type="RefSeq" id="WP_006489345.1">
    <property type="nucleotide sequence ID" value="NC_010508.1"/>
</dbReference>
<dbReference type="SMR" id="B1JTU9"/>
<dbReference type="GeneID" id="98105550"/>
<dbReference type="KEGG" id="bcm:Bcenmc03_1945"/>
<dbReference type="HOGENOM" id="CLU_014218_8_2_4"/>
<dbReference type="Proteomes" id="UP000002169">
    <property type="component" value="Chromosome 1"/>
</dbReference>
<dbReference type="GO" id="GO:0009376">
    <property type="term" value="C:HslUV protease complex"/>
    <property type="evidence" value="ECO:0007669"/>
    <property type="project" value="TreeGrafter"/>
</dbReference>
<dbReference type="GO" id="GO:0005524">
    <property type="term" value="F:ATP binding"/>
    <property type="evidence" value="ECO:0007669"/>
    <property type="project" value="UniProtKB-UniRule"/>
</dbReference>
<dbReference type="GO" id="GO:0016887">
    <property type="term" value="F:ATP hydrolysis activity"/>
    <property type="evidence" value="ECO:0007669"/>
    <property type="project" value="InterPro"/>
</dbReference>
<dbReference type="GO" id="GO:0140662">
    <property type="term" value="F:ATP-dependent protein folding chaperone"/>
    <property type="evidence" value="ECO:0007669"/>
    <property type="project" value="InterPro"/>
</dbReference>
<dbReference type="GO" id="GO:0046983">
    <property type="term" value="F:protein dimerization activity"/>
    <property type="evidence" value="ECO:0007669"/>
    <property type="project" value="InterPro"/>
</dbReference>
<dbReference type="GO" id="GO:0051082">
    <property type="term" value="F:unfolded protein binding"/>
    <property type="evidence" value="ECO:0007669"/>
    <property type="project" value="UniProtKB-UniRule"/>
</dbReference>
<dbReference type="GO" id="GO:0008270">
    <property type="term" value="F:zinc ion binding"/>
    <property type="evidence" value="ECO:0007669"/>
    <property type="project" value="InterPro"/>
</dbReference>
<dbReference type="GO" id="GO:0051301">
    <property type="term" value="P:cell division"/>
    <property type="evidence" value="ECO:0007669"/>
    <property type="project" value="TreeGrafter"/>
</dbReference>
<dbReference type="GO" id="GO:0051603">
    <property type="term" value="P:proteolysis involved in protein catabolic process"/>
    <property type="evidence" value="ECO:0007669"/>
    <property type="project" value="TreeGrafter"/>
</dbReference>
<dbReference type="CDD" id="cd19497">
    <property type="entry name" value="RecA-like_ClpX"/>
    <property type="match status" value="1"/>
</dbReference>
<dbReference type="FunFam" id="1.10.8.60:FF:000002">
    <property type="entry name" value="ATP-dependent Clp protease ATP-binding subunit ClpX"/>
    <property type="match status" value="1"/>
</dbReference>
<dbReference type="FunFam" id="3.40.50.300:FF:000005">
    <property type="entry name" value="ATP-dependent Clp protease ATP-binding subunit ClpX"/>
    <property type="match status" value="1"/>
</dbReference>
<dbReference type="Gene3D" id="1.10.8.60">
    <property type="match status" value="1"/>
</dbReference>
<dbReference type="Gene3D" id="6.20.220.10">
    <property type="entry name" value="ClpX chaperone, C4-type zinc finger domain"/>
    <property type="match status" value="1"/>
</dbReference>
<dbReference type="Gene3D" id="3.40.50.300">
    <property type="entry name" value="P-loop containing nucleotide triphosphate hydrolases"/>
    <property type="match status" value="1"/>
</dbReference>
<dbReference type="HAMAP" id="MF_00175">
    <property type="entry name" value="ClpX"/>
    <property type="match status" value="1"/>
</dbReference>
<dbReference type="InterPro" id="IPR003593">
    <property type="entry name" value="AAA+_ATPase"/>
</dbReference>
<dbReference type="InterPro" id="IPR050052">
    <property type="entry name" value="ATP-dep_Clp_protease_ClpX"/>
</dbReference>
<dbReference type="InterPro" id="IPR003959">
    <property type="entry name" value="ATPase_AAA_core"/>
</dbReference>
<dbReference type="InterPro" id="IPR019489">
    <property type="entry name" value="Clp_ATPase_C"/>
</dbReference>
<dbReference type="InterPro" id="IPR004487">
    <property type="entry name" value="Clp_protease_ATP-bd_su_ClpX"/>
</dbReference>
<dbReference type="InterPro" id="IPR046425">
    <property type="entry name" value="ClpX_bact"/>
</dbReference>
<dbReference type="InterPro" id="IPR027417">
    <property type="entry name" value="P-loop_NTPase"/>
</dbReference>
<dbReference type="InterPro" id="IPR010603">
    <property type="entry name" value="Znf_CppX_C4"/>
</dbReference>
<dbReference type="InterPro" id="IPR038366">
    <property type="entry name" value="Znf_CppX_C4_sf"/>
</dbReference>
<dbReference type="NCBIfam" id="TIGR00382">
    <property type="entry name" value="clpX"/>
    <property type="match status" value="1"/>
</dbReference>
<dbReference type="NCBIfam" id="NF003745">
    <property type="entry name" value="PRK05342.1"/>
    <property type="match status" value="1"/>
</dbReference>
<dbReference type="PANTHER" id="PTHR48102:SF7">
    <property type="entry name" value="ATP-DEPENDENT CLP PROTEASE ATP-BINDING SUBUNIT CLPX-LIKE, MITOCHONDRIAL"/>
    <property type="match status" value="1"/>
</dbReference>
<dbReference type="PANTHER" id="PTHR48102">
    <property type="entry name" value="ATP-DEPENDENT CLP PROTEASE ATP-BINDING SUBUNIT CLPX-LIKE, MITOCHONDRIAL-RELATED"/>
    <property type="match status" value="1"/>
</dbReference>
<dbReference type="Pfam" id="PF07724">
    <property type="entry name" value="AAA_2"/>
    <property type="match status" value="1"/>
</dbReference>
<dbReference type="Pfam" id="PF10431">
    <property type="entry name" value="ClpB_D2-small"/>
    <property type="match status" value="1"/>
</dbReference>
<dbReference type="Pfam" id="PF06689">
    <property type="entry name" value="zf-C4_ClpX"/>
    <property type="match status" value="1"/>
</dbReference>
<dbReference type="SMART" id="SM00382">
    <property type="entry name" value="AAA"/>
    <property type="match status" value="1"/>
</dbReference>
<dbReference type="SMART" id="SM01086">
    <property type="entry name" value="ClpB_D2-small"/>
    <property type="match status" value="1"/>
</dbReference>
<dbReference type="SMART" id="SM00994">
    <property type="entry name" value="zf-C4_ClpX"/>
    <property type="match status" value="1"/>
</dbReference>
<dbReference type="SUPFAM" id="SSF57716">
    <property type="entry name" value="Glucocorticoid receptor-like (DNA-binding domain)"/>
    <property type="match status" value="1"/>
</dbReference>
<dbReference type="SUPFAM" id="SSF52540">
    <property type="entry name" value="P-loop containing nucleoside triphosphate hydrolases"/>
    <property type="match status" value="1"/>
</dbReference>
<dbReference type="PROSITE" id="PS51902">
    <property type="entry name" value="CLPX_ZB"/>
    <property type="match status" value="1"/>
</dbReference>
<evidence type="ECO:0000255" key="1">
    <source>
        <dbReference type="HAMAP-Rule" id="MF_00175"/>
    </source>
</evidence>
<evidence type="ECO:0000255" key="2">
    <source>
        <dbReference type="PROSITE-ProRule" id="PRU01250"/>
    </source>
</evidence>
<reference key="1">
    <citation type="submission" date="2008-02" db="EMBL/GenBank/DDBJ databases">
        <title>Complete sequence of chromosome 1 of Burkholderia cenocepacia MC0-3.</title>
        <authorList>
            <person name="Copeland A."/>
            <person name="Lucas S."/>
            <person name="Lapidus A."/>
            <person name="Barry K."/>
            <person name="Bruce D."/>
            <person name="Goodwin L."/>
            <person name="Glavina del Rio T."/>
            <person name="Dalin E."/>
            <person name="Tice H."/>
            <person name="Pitluck S."/>
            <person name="Chain P."/>
            <person name="Malfatti S."/>
            <person name="Shin M."/>
            <person name="Vergez L."/>
            <person name="Schmutz J."/>
            <person name="Larimer F."/>
            <person name="Land M."/>
            <person name="Hauser L."/>
            <person name="Kyrpides N."/>
            <person name="Mikhailova N."/>
            <person name="Tiedje J."/>
            <person name="Richardson P."/>
        </authorList>
    </citation>
    <scope>NUCLEOTIDE SEQUENCE [LARGE SCALE GENOMIC DNA]</scope>
    <source>
        <strain>MC0-3</strain>
    </source>
</reference>
<proteinExistence type="inferred from homology"/>
<sequence>MADKKGSNSEKLLYCSFCGKSQHEVKKLIAGPSVFICDECIDLCNEIIRDEAAAAGVEASLSRSDLPSPQEIRDILDQYVIGQERAKKILAVAVYNHYKRLKHLDKKDDVELSKSNILLIGPTGSGKTLLAQTLARLLNVPFVIADATTLTEAGYVGEDVENIIQKLLQNCNYEVDKAQRGIVYIDEIDKISRKSDNPSITRDVSGEGVQQALLKLVEGTMASVPPQGGRKHPNQDFIQVDTTNILFICGGAFDGLEKVITDRTEKTGIGFGATVKSKQERDAGEVLRETEPEDLIKFGLIPELIGRLPVVATLGKLDEAALMKILVEPKNALVKQYHKLFAMERVELEIRPGALQAVARKAIRRKTGARGLRSIIEQALLDVMYELPTMKGVSKVIIDENVIDGDGKPLLIYEDTPKVAGSN</sequence>
<protein>
    <recommendedName>
        <fullName evidence="1">ATP-dependent Clp protease ATP-binding subunit ClpX</fullName>
    </recommendedName>
</protein>
<comment type="function">
    <text evidence="1">ATP-dependent specificity component of the Clp protease. It directs the protease to specific substrates. Can perform chaperone functions in the absence of ClpP.</text>
</comment>
<comment type="subunit">
    <text evidence="1">Component of the ClpX-ClpP complex. Forms a hexameric ring that, in the presence of ATP, binds to fourteen ClpP subunits assembled into a disk-like structure with a central cavity, resembling the structure of eukaryotic proteasomes.</text>
</comment>
<comment type="similarity">
    <text evidence="1">Belongs to the ClpX chaperone family.</text>
</comment>